<name>PHP22_DIALO</name>
<accession>A0A142I735</accession>
<organism>
    <name type="scientific">Diaporthe leptostromiformis</name>
    <name type="common">Lupinosis disease fungus</name>
    <name type="synonym">Phomopsis leptostromiformis</name>
    <dbReference type="NCBI Taxonomy" id="291059"/>
    <lineage>
        <taxon>Eukaryota</taxon>
        <taxon>Fungi</taxon>
        <taxon>Dikarya</taxon>
        <taxon>Ascomycota</taxon>
        <taxon>Pezizomycotina</taxon>
        <taxon>Sordariomycetes</taxon>
        <taxon>Sordariomycetidae</taxon>
        <taxon>Diaporthales</taxon>
        <taxon>Diaporthaceae</taxon>
        <taxon>Diaporthe</taxon>
    </lineage>
</organism>
<keyword id="KW-0325">Glycoprotein</keyword>
<keyword id="KW-0472">Membrane</keyword>
<keyword id="KW-0571">Peptide transport</keyword>
<keyword id="KW-0653">Protein transport</keyword>
<keyword id="KW-0812">Transmembrane</keyword>
<keyword id="KW-1133">Transmembrane helix</keyword>
<keyword id="KW-0813">Transport</keyword>
<keyword id="KW-0843">Virulence</keyword>
<sequence length="842" mass="92468">MEADPKVPFTDEMNIQDEHNWESGSWSSSRRSNDSNVTLLSRRSSVEQHEDERQKDSDTLFEHGDAALDAQGIADPRLKDYPIPLVAQTVHLRNDDSEPILTFRVWLLSTFWVLAGCSISTVYYFKPFSVRLSGYVVQLCTWKMGQLLASALPTRPFTVLGRRWTLNPGRWSAKEHALVVIAYWGSSYTAYGLGPLSAMELFYGKRLSSPWAITFLVTTQLTGYGLVGLYRHILVRPPSMYYPGILPTVSLFNAMHGDPRQTASSLRVFMAIASAAFVYQWLPSFVFPLLSSLPLLCWVGRGSWEAFVLGSGSLGFGLMDFSLDWNYVAFLSPLFTPLWANANRFVGAALAVWITYPVAYFSDALGSLRFPPMSSETFDTSGGLYNVSRIMTPSLELNQTALELYSTPRWSFSYAMHFFWGFASASAIVTYAVLFHGRTILKALANVWSLDGNTADDIDSEKDPYVKLTSHHARVPQAWYALLLAVCLCLGTIQLYAGDMQLPWWGLQLVVAISALFTLPCGMLFATANVQIGMDYVSEVLAGALFPGRPVAVLTATVYGRQVLEQCLNLASDLKLGFYMKIPEWELLVAQVYGTLLGPFVNWAVMRLIIDTQGAAALLGREGGDGKGQGLGLGQGGGGGGGGGGGGGQQQRAAGAHTTEWNALKTKNFFSSSVIWGVMGPARVFGGGDGSPSSSSPYRWLLPSGFAVGAAAVLLLWLIHKARPAWRVQQWPLHPAIIFHGASLFPVFPTTNLTSSMAAAVASMGVMRRWHPRWFARWNYLLGAGLDCGAQLVQMVLGLAFLVFNRHGQQMVRMPHWWGNDAVAVDQCFPPPDLPSVIMSPM</sequence>
<proteinExistence type="inferred from homology"/>
<protein>
    <recommendedName>
        <fullName evidence="7">Oligopeptide transporter phomP2'</fullName>
    </recommendedName>
    <alternativeName>
        <fullName evidence="7">Phomopsin biosynthesis cluster protein P2'</fullName>
    </alternativeName>
</protein>
<comment type="function">
    <text evidence="4 5">Oligopeptide transporter; part of the gene cluster that mediates the biosynthesis of the phomopsins, a group of hexapeptide mycotoxins which infects lupins and causes lupinosis disease in livestock.</text>
</comment>
<comment type="subcellular location">
    <subcellularLocation>
        <location evidence="1">Membrane</location>
        <topology evidence="1">Multi-pass membrane protein</topology>
    </subcellularLocation>
</comment>
<comment type="similarity">
    <text evidence="8">Belongs to the oligopeptide OPT transporter family.</text>
</comment>
<reference key="1">
    <citation type="journal article" date="2016" name="Proc. Natl. Acad. Sci. U.S.A.">
        <title>Biosynthetic investigation of phomopsins reveals a widespread pathway for ribosomal natural products in Ascomycetes.</title>
        <authorList>
            <person name="Ding W."/>
            <person name="Liu W.Q."/>
            <person name="Jia Y."/>
            <person name="Li Y."/>
            <person name="van der Donk W.A."/>
            <person name="Zhang Q."/>
        </authorList>
    </citation>
    <scope>NUCLEOTIDE SEQUENCE [GENOMIC DNA]</scope>
    <scope>FUNCTION</scope>
    <source>
        <strain>ATCC 26115 / IMI 115107 / C 1557</strain>
    </source>
</reference>
<reference key="2">
    <citation type="journal article" date="2021" name="Angew. Chem. Int. Ed.">
        <title>Biosynthetic studies of phomopsins unveil posttranslational installation of dehydroamino acids by ustYa family proteins.</title>
        <authorList>
            <person name="Sogahata K."/>
            <person name="Ozaki T."/>
            <person name="Igarashi Y."/>
            <person name="Naganuma Y."/>
            <person name="Liu C."/>
            <person name="Minami A."/>
            <person name="Oikawa H."/>
        </authorList>
    </citation>
    <scope>NOMENCLATURE</scope>
    <scope>FUNCTION</scope>
    <source>
        <strain>ATCC 26115 / IMI 115107 / C 1557</strain>
    </source>
</reference>
<feature type="chain" id="PRO_0000458384" description="Oligopeptide transporter phomP2'">
    <location>
        <begin position="1"/>
        <end position="842"/>
    </location>
</feature>
<feature type="transmembrane region" description="Helical" evidence="1">
    <location>
        <begin position="105"/>
        <end position="125"/>
    </location>
</feature>
<feature type="transmembrane region" description="Helical" evidence="1">
    <location>
        <begin position="177"/>
        <end position="197"/>
    </location>
</feature>
<feature type="transmembrane region" description="Helical" evidence="1">
    <location>
        <begin position="210"/>
        <end position="230"/>
    </location>
</feature>
<feature type="transmembrane region" description="Helical" evidence="1">
    <location>
        <begin position="268"/>
        <end position="288"/>
    </location>
</feature>
<feature type="transmembrane region" description="Helical" evidence="1">
    <location>
        <begin position="315"/>
        <end position="335"/>
    </location>
</feature>
<feature type="transmembrane region" description="Helical" evidence="1">
    <location>
        <begin position="345"/>
        <end position="365"/>
    </location>
</feature>
<feature type="transmembrane region" description="Helical" evidence="1">
    <location>
        <begin position="415"/>
        <end position="435"/>
    </location>
</feature>
<feature type="transmembrane region" description="Helical" evidence="1">
    <location>
        <begin position="478"/>
        <end position="498"/>
    </location>
</feature>
<feature type="transmembrane region" description="Helical" evidence="1">
    <location>
        <begin position="505"/>
        <end position="525"/>
    </location>
</feature>
<feature type="transmembrane region" description="Helical" evidence="1">
    <location>
        <begin position="585"/>
        <end position="605"/>
    </location>
</feature>
<feature type="transmembrane region" description="Helical" evidence="1">
    <location>
        <begin position="668"/>
        <end position="688"/>
    </location>
</feature>
<feature type="transmembrane region" description="Helical" evidence="1">
    <location>
        <begin position="700"/>
        <end position="720"/>
    </location>
</feature>
<feature type="transmembrane region" description="Helical" evidence="1">
    <location>
        <begin position="731"/>
        <end position="751"/>
    </location>
</feature>
<feature type="transmembrane region" description="Helical" evidence="1">
    <location>
        <begin position="784"/>
        <end position="804"/>
    </location>
</feature>
<feature type="region of interest" description="Disordered" evidence="3">
    <location>
        <begin position="1"/>
        <end position="58"/>
    </location>
</feature>
<feature type="region of interest" description="Disordered" evidence="3">
    <location>
        <begin position="629"/>
        <end position="657"/>
    </location>
</feature>
<feature type="compositionally biased region" description="Low complexity" evidence="3">
    <location>
        <begin position="23"/>
        <end position="36"/>
    </location>
</feature>
<feature type="compositionally biased region" description="Basic and acidic residues" evidence="3">
    <location>
        <begin position="44"/>
        <end position="58"/>
    </location>
</feature>
<feature type="compositionally biased region" description="Gly residues" evidence="3">
    <location>
        <begin position="629"/>
        <end position="649"/>
    </location>
</feature>
<feature type="glycosylation site" description="N-linked (GlcNAc...) asparagine" evidence="2">
    <location>
        <position position="33"/>
    </location>
</feature>
<feature type="glycosylation site" description="N-linked (GlcNAc...) asparagine" evidence="2">
    <location>
        <position position="36"/>
    </location>
</feature>
<feature type="glycosylation site" description="N-linked (GlcNAc...) asparagine" evidence="2">
    <location>
        <position position="386"/>
    </location>
</feature>
<feature type="glycosylation site" description="N-linked (GlcNAc...) asparagine" evidence="2">
    <location>
        <position position="398"/>
    </location>
</feature>
<feature type="glycosylation site" description="N-linked (GlcNAc...) asparagine" evidence="2">
    <location>
        <position position="752"/>
    </location>
</feature>
<dbReference type="EMBL" id="KU645839">
    <property type="protein sequence ID" value="AMR44287.1"/>
    <property type="molecule type" value="Genomic_DNA"/>
</dbReference>
<dbReference type="GO" id="GO:0016020">
    <property type="term" value="C:membrane"/>
    <property type="evidence" value="ECO:0007669"/>
    <property type="project" value="UniProtKB-SubCell"/>
</dbReference>
<dbReference type="GO" id="GO:0035673">
    <property type="term" value="F:oligopeptide transmembrane transporter activity"/>
    <property type="evidence" value="ECO:0007669"/>
    <property type="project" value="InterPro"/>
</dbReference>
<dbReference type="GO" id="GO:0015031">
    <property type="term" value="P:protein transport"/>
    <property type="evidence" value="ECO:0007669"/>
    <property type="project" value="UniProtKB-KW"/>
</dbReference>
<dbReference type="InterPro" id="IPR004648">
    <property type="entry name" value="Oligpept_transpt"/>
</dbReference>
<dbReference type="InterPro" id="IPR004813">
    <property type="entry name" value="OPT"/>
</dbReference>
<dbReference type="NCBIfam" id="TIGR00728">
    <property type="entry name" value="OPT_sfam"/>
    <property type="match status" value="1"/>
</dbReference>
<dbReference type="PANTHER" id="PTHR22601">
    <property type="entry name" value="ISP4 LIKE PROTEIN"/>
    <property type="match status" value="1"/>
</dbReference>
<dbReference type="Pfam" id="PF03169">
    <property type="entry name" value="OPT"/>
    <property type="match status" value="2"/>
</dbReference>
<evidence type="ECO:0000255" key="1"/>
<evidence type="ECO:0000255" key="2">
    <source>
        <dbReference type="PROSITE-ProRule" id="PRU00498"/>
    </source>
</evidence>
<evidence type="ECO:0000256" key="3">
    <source>
        <dbReference type="SAM" id="MobiDB-lite"/>
    </source>
</evidence>
<evidence type="ECO:0000269" key="4">
    <source>
    </source>
</evidence>
<evidence type="ECO:0000269" key="5">
    <source>
    </source>
</evidence>
<evidence type="ECO:0000303" key="6">
    <source>
    </source>
</evidence>
<evidence type="ECO:0000303" key="7">
    <source>
    </source>
</evidence>
<evidence type="ECO:0000305" key="8"/>
<gene>
    <name evidence="7" type="primary">PhomP2'</name>
    <name evidence="6" type="synonym">PhomP2</name>
</gene>